<evidence type="ECO:0000255" key="1">
    <source>
        <dbReference type="HAMAP-Rule" id="MF_03122"/>
    </source>
</evidence>
<evidence type="ECO:0000256" key="2">
    <source>
        <dbReference type="SAM" id="MobiDB-lite"/>
    </source>
</evidence>
<evidence type="ECO:0000305" key="3"/>
<sequence length="255" mass="29072">MAVGKNKRLSKGKKGLKKRTQDPFSRKDEYSVKAPSTFAIRDVGKTLVNRTTGLKNANDSLKGRIFEVSLADLQNDEDHAFRKVKLRVDEVQGKNCLTNFHGLDFTSDKLRSLVRKWQTLIEANVTVKTTDDYLLRLFAIAFTKRRPNQIKKTTYARSSQIRAIRKKITEIIQREASTRTLAQLTKLIPEVIGREIEKATHGIYPLQNVHIRKVKLLKSPKFDLGALLALHGESSTDDKGQKVEREFKEQVLESV</sequence>
<proteinExistence type="inferred from homology"/>
<keyword id="KW-0007">Acetylation</keyword>
<keyword id="KW-0963">Cytoplasm</keyword>
<keyword id="KW-1185">Reference proteome</keyword>
<keyword id="KW-0687">Ribonucleoprotein</keyword>
<keyword id="KW-0689">Ribosomal protein</keyword>
<name>RS3A_BLAGS</name>
<protein>
    <recommendedName>
        <fullName evidence="1">Small ribosomal subunit protein eS1</fullName>
    </recommendedName>
    <alternativeName>
        <fullName evidence="3">40S ribosomal protein S1</fullName>
    </alternativeName>
</protein>
<feature type="initiator methionine" description="Removed" evidence="1">
    <location>
        <position position="1"/>
    </location>
</feature>
<feature type="chain" id="PRO_0000389354" description="Small ribosomal subunit protein eS1">
    <location>
        <begin position="2"/>
        <end position="255"/>
    </location>
</feature>
<feature type="region of interest" description="Disordered" evidence="2">
    <location>
        <begin position="1"/>
        <end position="28"/>
    </location>
</feature>
<feature type="compositionally biased region" description="Basic residues" evidence="2">
    <location>
        <begin position="1"/>
        <end position="18"/>
    </location>
</feature>
<feature type="compositionally biased region" description="Basic and acidic residues" evidence="2">
    <location>
        <begin position="19"/>
        <end position="28"/>
    </location>
</feature>
<feature type="modified residue" description="N-acetylalanine; partial" evidence="1">
    <location>
        <position position="2"/>
    </location>
</feature>
<reference key="1">
    <citation type="journal article" date="2015" name="PLoS Genet.">
        <title>The dynamic genome and transcriptome of the human fungal pathogen Blastomyces and close relative Emmonsia.</title>
        <authorList>
            <person name="Munoz J.F."/>
            <person name="Gauthier G.M."/>
            <person name="Desjardins C.A."/>
            <person name="Gallo J.E."/>
            <person name="Holder J."/>
            <person name="Sullivan T.D."/>
            <person name="Marty A.J."/>
            <person name="Carmen J.C."/>
            <person name="Chen Z."/>
            <person name="Ding L."/>
            <person name="Gujja S."/>
            <person name="Magrini V."/>
            <person name="Misas E."/>
            <person name="Mitreva M."/>
            <person name="Priest M."/>
            <person name="Saif S."/>
            <person name="Whiston E.A."/>
            <person name="Young S."/>
            <person name="Zeng Q."/>
            <person name="Goldman W.E."/>
            <person name="Mardis E.R."/>
            <person name="Taylor J.W."/>
            <person name="McEwen J.G."/>
            <person name="Clay O.K."/>
            <person name="Klein B.S."/>
            <person name="Cuomo C.A."/>
        </authorList>
    </citation>
    <scope>NUCLEOTIDE SEQUENCE [LARGE SCALE GENOMIC DNA]</scope>
    <source>
        <strain>SLH14081</strain>
    </source>
</reference>
<accession>C5JZ38</accession>
<accession>A0A179UZ62</accession>
<gene>
    <name evidence="1" type="primary">RPS1</name>
    <name type="ORF">BDBG_07832</name>
</gene>
<organism>
    <name type="scientific">Blastomyces gilchristii (strain SLH14081)</name>
    <name type="common">Blastomyces dermatitidis</name>
    <dbReference type="NCBI Taxonomy" id="559298"/>
    <lineage>
        <taxon>Eukaryota</taxon>
        <taxon>Fungi</taxon>
        <taxon>Dikarya</taxon>
        <taxon>Ascomycota</taxon>
        <taxon>Pezizomycotina</taxon>
        <taxon>Eurotiomycetes</taxon>
        <taxon>Eurotiomycetidae</taxon>
        <taxon>Onygenales</taxon>
        <taxon>Ajellomycetaceae</taxon>
        <taxon>Blastomyces</taxon>
    </lineage>
</organism>
<dbReference type="EMBL" id="GG657468">
    <property type="protein sequence ID" value="OAT12499.1"/>
    <property type="molecule type" value="Genomic_DNA"/>
</dbReference>
<dbReference type="RefSeq" id="XP_002621614.1">
    <property type="nucleotide sequence ID" value="XM_002621568.1"/>
</dbReference>
<dbReference type="SMR" id="C5JZ38"/>
<dbReference type="STRING" id="559298.C5JZ38"/>
<dbReference type="GeneID" id="8502044"/>
<dbReference type="KEGG" id="bgh:BDBG_07832"/>
<dbReference type="VEuPathDB" id="FungiDB:BDBG_07832"/>
<dbReference type="HOGENOM" id="CLU_062507_0_0_1"/>
<dbReference type="OrthoDB" id="9834376at2759"/>
<dbReference type="Proteomes" id="UP000002038">
    <property type="component" value="Unassembled WGS sequence"/>
</dbReference>
<dbReference type="GO" id="GO:0022627">
    <property type="term" value="C:cytosolic small ribosomal subunit"/>
    <property type="evidence" value="ECO:0007669"/>
    <property type="project" value="UniProtKB-UniRule"/>
</dbReference>
<dbReference type="GO" id="GO:0003735">
    <property type="term" value="F:structural constituent of ribosome"/>
    <property type="evidence" value="ECO:0007669"/>
    <property type="project" value="UniProtKB-UniRule"/>
</dbReference>
<dbReference type="GO" id="GO:0006412">
    <property type="term" value="P:translation"/>
    <property type="evidence" value="ECO:0007669"/>
    <property type="project" value="UniProtKB-UniRule"/>
</dbReference>
<dbReference type="HAMAP" id="MF_03122">
    <property type="entry name" value="Ribosomal_eS1_euk"/>
    <property type="match status" value="1"/>
</dbReference>
<dbReference type="InterPro" id="IPR001593">
    <property type="entry name" value="Ribosomal_eS1"/>
</dbReference>
<dbReference type="InterPro" id="IPR018281">
    <property type="entry name" value="Ribosomal_eS1_CS"/>
</dbReference>
<dbReference type="InterPro" id="IPR027500">
    <property type="entry name" value="Ribosomal_eS1_euk"/>
</dbReference>
<dbReference type="PANTHER" id="PTHR11830">
    <property type="entry name" value="40S RIBOSOMAL PROTEIN S3A"/>
    <property type="match status" value="1"/>
</dbReference>
<dbReference type="Pfam" id="PF01015">
    <property type="entry name" value="Ribosomal_S3Ae"/>
    <property type="match status" value="1"/>
</dbReference>
<dbReference type="SMART" id="SM01397">
    <property type="entry name" value="Ribosomal_S3Ae"/>
    <property type="match status" value="1"/>
</dbReference>
<dbReference type="PROSITE" id="PS01191">
    <property type="entry name" value="RIBOSOMAL_S3AE"/>
    <property type="match status" value="1"/>
</dbReference>
<comment type="subunit">
    <text evidence="1">Component of the small ribosomal subunit. Mature ribosomes consist of a small (40S) and a large (60S) subunit. The 40S subunit contains about 33 different proteins and 1 molecule of RNA (18S). The 60S subunit contains about 49 different proteins and 3 molecules of RNA (25S, 5.8S and 5S).</text>
</comment>
<comment type="subcellular location">
    <subcellularLocation>
        <location evidence="1">Cytoplasm</location>
    </subcellularLocation>
</comment>
<comment type="similarity">
    <text evidence="1">Belongs to the eukaryotic ribosomal protein eS1 family.</text>
</comment>